<sequence length="203" mass="21744">MKSRNGPLRVGIGGPVGSGKTALTEKLCKAMRDDYSVAVVTNDIYTTEDAEALVRMQALTSDRIVGVETGGCPHTAIREDATINLQAIAGLNRRIPDLDVVFIESGGDNLAATFSPDLADITIYVISVCQGEEIPRKGGPGITRSDLLVINKKDLAPYVGADLEVMDRDATRMRASRPFVFSDMKRGDGVSSIVSFLREQGGL</sequence>
<accession>Q1MCW4</accession>
<comment type="function">
    <text evidence="1">Facilitates the functional incorporation of the urease nickel metallocenter. This process requires GTP hydrolysis, probably effectuated by UreG.</text>
</comment>
<comment type="subunit">
    <text evidence="1">Homodimer. UreD, UreF and UreG form a complex that acts as a GTP-hydrolysis-dependent molecular chaperone, activating the urease apoprotein by helping to assemble the nickel containing metallocenter of UreC. The UreE protein probably delivers the nickel.</text>
</comment>
<comment type="subcellular location">
    <subcellularLocation>
        <location evidence="1">Cytoplasm</location>
    </subcellularLocation>
</comment>
<comment type="similarity">
    <text evidence="1">Belongs to the SIMIBI class G3E GTPase family. UreG subfamily.</text>
</comment>
<protein>
    <recommendedName>
        <fullName evidence="1">Urease accessory protein UreG</fullName>
    </recommendedName>
</protein>
<feature type="chain" id="PRO_1000145211" description="Urease accessory protein UreG">
    <location>
        <begin position="1"/>
        <end position="203"/>
    </location>
</feature>
<feature type="binding site" evidence="1">
    <location>
        <begin position="14"/>
        <end position="21"/>
    </location>
    <ligand>
        <name>GTP</name>
        <dbReference type="ChEBI" id="CHEBI:37565"/>
    </ligand>
</feature>
<evidence type="ECO:0000255" key="1">
    <source>
        <dbReference type="HAMAP-Rule" id="MF_01389"/>
    </source>
</evidence>
<dbReference type="EMBL" id="AM236080">
    <property type="protein sequence ID" value="CAK09216.1"/>
    <property type="molecule type" value="Genomic_DNA"/>
</dbReference>
<dbReference type="RefSeq" id="WP_011653180.1">
    <property type="nucleotide sequence ID" value="NC_008380.1"/>
</dbReference>
<dbReference type="SMR" id="Q1MCW4"/>
<dbReference type="EnsemblBacteria" id="CAK09216">
    <property type="protein sequence ID" value="CAK09216"/>
    <property type="gene ID" value="RL3727"/>
</dbReference>
<dbReference type="KEGG" id="rle:RL3727"/>
<dbReference type="eggNOG" id="COG0378">
    <property type="taxonomic scope" value="Bacteria"/>
</dbReference>
<dbReference type="HOGENOM" id="CLU_072144_1_0_5"/>
<dbReference type="Proteomes" id="UP000006575">
    <property type="component" value="Chromosome"/>
</dbReference>
<dbReference type="GO" id="GO:0005737">
    <property type="term" value="C:cytoplasm"/>
    <property type="evidence" value="ECO:0007669"/>
    <property type="project" value="UniProtKB-SubCell"/>
</dbReference>
<dbReference type="GO" id="GO:0005525">
    <property type="term" value="F:GTP binding"/>
    <property type="evidence" value="ECO:0007669"/>
    <property type="project" value="UniProtKB-KW"/>
</dbReference>
<dbReference type="GO" id="GO:0003924">
    <property type="term" value="F:GTPase activity"/>
    <property type="evidence" value="ECO:0007669"/>
    <property type="project" value="InterPro"/>
</dbReference>
<dbReference type="GO" id="GO:0016151">
    <property type="term" value="F:nickel cation binding"/>
    <property type="evidence" value="ECO:0007669"/>
    <property type="project" value="UniProtKB-UniRule"/>
</dbReference>
<dbReference type="GO" id="GO:0043419">
    <property type="term" value="P:urea catabolic process"/>
    <property type="evidence" value="ECO:0007669"/>
    <property type="project" value="InterPro"/>
</dbReference>
<dbReference type="CDD" id="cd05540">
    <property type="entry name" value="UreG"/>
    <property type="match status" value="1"/>
</dbReference>
<dbReference type="FunFam" id="3.40.50.300:FF:000208">
    <property type="entry name" value="Urease accessory protein UreG"/>
    <property type="match status" value="1"/>
</dbReference>
<dbReference type="Gene3D" id="3.40.50.300">
    <property type="entry name" value="P-loop containing nucleotide triphosphate hydrolases"/>
    <property type="match status" value="1"/>
</dbReference>
<dbReference type="HAMAP" id="MF_01389">
    <property type="entry name" value="UreG"/>
    <property type="match status" value="1"/>
</dbReference>
<dbReference type="InterPro" id="IPR003495">
    <property type="entry name" value="CobW/HypB/UreG_nucleotide-bd"/>
</dbReference>
<dbReference type="InterPro" id="IPR027417">
    <property type="entry name" value="P-loop_NTPase"/>
</dbReference>
<dbReference type="InterPro" id="IPR004400">
    <property type="entry name" value="UreG"/>
</dbReference>
<dbReference type="NCBIfam" id="TIGR00101">
    <property type="entry name" value="ureG"/>
    <property type="match status" value="1"/>
</dbReference>
<dbReference type="PANTHER" id="PTHR31715">
    <property type="entry name" value="UREASE ACCESSORY PROTEIN G"/>
    <property type="match status" value="1"/>
</dbReference>
<dbReference type="PANTHER" id="PTHR31715:SF0">
    <property type="entry name" value="UREASE ACCESSORY PROTEIN G"/>
    <property type="match status" value="1"/>
</dbReference>
<dbReference type="Pfam" id="PF02492">
    <property type="entry name" value="cobW"/>
    <property type="match status" value="1"/>
</dbReference>
<dbReference type="PIRSF" id="PIRSF005624">
    <property type="entry name" value="Ni-bind_GTPase"/>
    <property type="match status" value="1"/>
</dbReference>
<dbReference type="SUPFAM" id="SSF52540">
    <property type="entry name" value="P-loop containing nucleoside triphosphate hydrolases"/>
    <property type="match status" value="1"/>
</dbReference>
<name>UREG_RHIJ3</name>
<gene>
    <name evidence="1" type="primary">ureG</name>
    <name type="ordered locus">RL3727</name>
</gene>
<proteinExistence type="inferred from homology"/>
<keyword id="KW-0143">Chaperone</keyword>
<keyword id="KW-0963">Cytoplasm</keyword>
<keyword id="KW-0342">GTP-binding</keyword>
<keyword id="KW-0996">Nickel insertion</keyword>
<keyword id="KW-0547">Nucleotide-binding</keyword>
<organism>
    <name type="scientific">Rhizobium johnstonii (strain DSM 114642 / LMG 32736 / 3841)</name>
    <name type="common">Rhizobium leguminosarum bv. viciae</name>
    <dbReference type="NCBI Taxonomy" id="216596"/>
    <lineage>
        <taxon>Bacteria</taxon>
        <taxon>Pseudomonadati</taxon>
        <taxon>Pseudomonadota</taxon>
        <taxon>Alphaproteobacteria</taxon>
        <taxon>Hyphomicrobiales</taxon>
        <taxon>Rhizobiaceae</taxon>
        <taxon>Rhizobium/Agrobacterium group</taxon>
        <taxon>Rhizobium</taxon>
        <taxon>Rhizobium johnstonii</taxon>
    </lineage>
</organism>
<reference key="1">
    <citation type="journal article" date="2006" name="Genome Biol.">
        <title>The genome of Rhizobium leguminosarum has recognizable core and accessory components.</title>
        <authorList>
            <person name="Young J.P.W."/>
            <person name="Crossman L.C."/>
            <person name="Johnston A.W.B."/>
            <person name="Thomson N.R."/>
            <person name="Ghazoui Z.F."/>
            <person name="Hull K.H."/>
            <person name="Wexler M."/>
            <person name="Curson A.R.J."/>
            <person name="Todd J.D."/>
            <person name="Poole P.S."/>
            <person name="Mauchline T.H."/>
            <person name="East A.K."/>
            <person name="Quail M.A."/>
            <person name="Churcher C."/>
            <person name="Arrowsmith C."/>
            <person name="Cherevach I."/>
            <person name="Chillingworth T."/>
            <person name="Clarke K."/>
            <person name="Cronin A."/>
            <person name="Davis P."/>
            <person name="Fraser A."/>
            <person name="Hance Z."/>
            <person name="Hauser H."/>
            <person name="Jagels K."/>
            <person name="Moule S."/>
            <person name="Mungall K."/>
            <person name="Norbertczak H."/>
            <person name="Rabbinowitsch E."/>
            <person name="Sanders M."/>
            <person name="Simmonds M."/>
            <person name="Whitehead S."/>
            <person name="Parkhill J."/>
        </authorList>
    </citation>
    <scope>NUCLEOTIDE SEQUENCE [LARGE SCALE GENOMIC DNA]</scope>
    <source>
        <strain>DSM 114642 / LMG 32736 / 3841</strain>
    </source>
</reference>